<evidence type="ECO:0000250" key="1"/>
<evidence type="ECO:0000255" key="2"/>
<evidence type="ECO:0000305" key="3"/>
<name>WLSA_XENLA</name>
<keyword id="KW-0968">Cytoplasmic vesicle</keyword>
<keyword id="KW-0217">Developmental protein</keyword>
<keyword id="KW-0333">Golgi apparatus</keyword>
<keyword id="KW-0472">Membrane</keyword>
<keyword id="KW-1185">Reference proteome</keyword>
<keyword id="KW-0732">Signal</keyword>
<keyword id="KW-0812">Transmembrane</keyword>
<keyword id="KW-1133">Transmembrane helix</keyword>
<keyword id="KW-0879">Wnt signaling pathway</keyword>
<feature type="signal peptide" evidence="2">
    <location>
        <begin position="1"/>
        <end position="28"/>
    </location>
</feature>
<feature type="chain" id="PRO_0000271782" description="Protein wntless homolog A">
    <location>
        <begin position="29"/>
        <end position="541"/>
    </location>
</feature>
<feature type="topological domain" description="Lumenal" evidence="2">
    <location>
        <begin position="29"/>
        <end position="232"/>
    </location>
</feature>
<feature type="transmembrane region" description="Helical; Name=1" evidence="2">
    <location>
        <begin position="233"/>
        <end position="253"/>
    </location>
</feature>
<feature type="topological domain" description="Cytoplasmic" evidence="2">
    <location>
        <begin position="254"/>
        <end position="268"/>
    </location>
</feature>
<feature type="transmembrane region" description="Helical; Name=2" evidence="2">
    <location>
        <begin position="269"/>
        <end position="289"/>
    </location>
</feature>
<feature type="topological domain" description="Lumenal" evidence="2">
    <location>
        <begin position="290"/>
        <end position="303"/>
    </location>
</feature>
<feature type="transmembrane region" description="Helical; Name=3" evidence="2">
    <location>
        <begin position="304"/>
        <end position="324"/>
    </location>
</feature>
<feature type="topological domain" description="Cytoplasmic" evidence="2">
    <location>
        <begin position="325"/>
        <end position="331"/>
    </location>
</feature>
<feature type="transmembrane region" description="Helical; Name=4" evidence="2">
    <location>
        <begin position="332"/>
        <end position="352"/>
    </location>
</feature>
<feature type="topological domain" description="Lumenal" evidence="2">
    <location>
        <begin position="353"/>
        <end position="379"/>
    </location>
</feature>
<feature type="transmembrane region" description="Helical; Name=5" evidence="2">
    <location>
        <begin position="380"/>
        <end position="400"/>
    </location>
</feature>
<feature type="topological domain" description="Cytoplasmic" evidence="2">
    <location>
        <begin position="401"/>
        <end position="431"/>
    </location>
</feature>
<feature type="transmembrane region" description="Helical; Name=6" evidence="2">
    <location>
        <begin position="432"/>
        <end position="452"/>
    </location>
</feature>
<feature type="topological domain" description="Lumenal" evidence="2">
    <location>
        <begin position="453"/>
        <end position="471"/>
    </location>
</feature>
<feature type="transmembrane region" description="Helical; Name=7" evidence="2">
    <location>
        <begin position="472"/>
        <end position="492"/>
    </location>
</feature>
<feature type="topological domain" description="Cytoplasmic" evidence="2">
    <location>
        <begin position="493"/>
        <end position="541"/>
    </location>
</feature>
<organism>
    <name type="scientific">Xenopus laevis</name>
    <name type="common">African clawed frog</name>
    <dbReference type="NCBI Taxonomy" id="8355"/>
    <lineage>
        <taxon>Eukaryota</taxon>
        <taxon>Metazoa</taxon>
        <taxon>Chordata</taxon>
        <taxon>Craniata</taxon>
        <taxon>Vertebrata</taxon>
        <taxon>Euteleostomi</taxon>
        <taxon>Amphibia</taxon>
        <taxon>Batrachia</taxon>
        <taxon>Anura</taxon>
        <taxon>Pipoidea</taxon>
        <taxon>Pipidae</taxon>
        <taxon>Xenopodinae</taxon>
        <taxon>Xenopus</taxon>
        <taxon>Xenopus</taxon>
    </lineage>
</organism>
<dbReference type="EMBL" id="BC081130">
    <property type="protein sequence ID" value="AAH81130.1"/>
    <property type="molecule type" value="mRNA"/>
</dbReference>
<dbReference type="RefSeq" id="NP_001087716.1">
    <property type="nucleotide sequence ID" value="NM_001094247.1"/>
</dbReference>
<dbReference type="SMR" id="Q66IZ4"/>
<dbReference type="DNASU" id="447540"/>
<dbReference type="GeneID" id="447540"/>
<dbReference type="KEGG" id="xla:447540"/>
<dbReference type="AGR" id="Xenbase:XB-GENE-6253761"/>
<dbReference type="CTD" id="447540"/>
<dbReference type="Xenbase" id="XB-GENE-6253761">
    <property type="gene designation" value="wls.S"/>
</dbReference>
<dbReference type="OMA" id="GQWKWDE"/>
<dbReference type="OrthoDB" id="5804250at2759"/>
<dbReference type="Proteomes" id="UP000186698">
    <property type="component" value="Chromosome 4S"/>
</dbReference>
<dbReference type="Bgee" id="447540">
    <property type="expression patterns" value="Expressed in internal ear and 19 other cell types or tissues"/>
</dbReference>
<dbReference type="GO" id="GO:0030659">
    <property type="term" value="C:cytoplasmic vesicle membrane"/>
    <property type="evidence" value="ECO:0007669"/>
    <property type="project" value="UniProtKB-SubCell"/>
</dbReference>
<dbReference type="GO" id="GO:0012505">
    <property type="term" value="C:endomembrane system"/>
    <property type="evidence" value="ECO:0000318"/>
    <property type="project" value="GO_Central"/>
</dbReference>
<dbReference type="GO" id="GO:0000139">
    <property type="term" value="C:Golgi membrane"/>
    <property type="evidence" value="ECO:0007669"/>
    <property type="project" value="UniProtKB-SubCell"/>
</dbReference>
<dbReference type="GO" id="GO:0031090">
    <property type="term" value="C:organelle membrane"/>
    <property type="evidence" value="ECO:0000318"/>
    <property type="project" value="GO_Central"/>
</dbReference>
<dbReference type="GO" id="GO:0017147">
    <property type="term" value="F:Wnt-protein binding"/>
    <property type="evidence" value="ECO:0000318"/>
    <property type="project" value="GO_Central"/>
</dbReference>
<dbReference type="GO" id="GO:0006886">
    <property type="term" value="P:intracellular protein transport"/>
    <property type="evidence" value="ECO:0000318"/>
    <property type="project" value="GO_Central"/>
</dbReference>
<dbReference type="GO" id="GO:0061357">
    <property type="term" value="P:positive regulation of Wnt protein secretion"/>
    <property type="evidence" value="ECO:0000250"/>
    <property type="project" value="ParkinsonsUK-UCL"/>
</dbReference>
<dbReference type="GO" id="GO:0030177">
    <property type="term" value="P:positive regulation of Wnt signaling pathway"/>
    <property type="evidence" value="ECO:0000250"/>
    <property type="project" value="ParkinsonsUK-UCL"/>
</dbReference>
<dbReference type="GO" id="GO:0061355">
    <property type="term" value="P:Wnt protein secretion"/>
    <property type="evidence" value="ECO:0000318"/>
    <property type="project" value="GO_Central"/>
</dbReference>
<dbReference type="GO" id="GO:0016055">
    <property type="term" value="P:Wnt signaling pathway"/>
    <property type="evidence" value="ECO:0007669"/>
    <property type="project" value="UniProtKB-KW"/>
</dbReference>
<dbReference type="InterPro" id="IPR047843">
    <property type="entry name" value="WLS-like_TM"/>
</dbReference>
<dbReference type="InterPro" id="IPR053936">
    <property type="entry name" value="WLS_GOLD"/>
</dbReference>
<dbReference type="InterPro" id="IPR009551">
    <property type="entry name" value="Wntless"/>
</dbReference>
<dbReference type="PANTHER" id="PTHR13449">
    <property type="entry name" value="INTEGRAL MEMBRANE PROTEIN GPR177"/>
    <property type="match status" value="1"/>
</dbReference>
<dbReference type="PANTHER" id="PTHR13449:SF2">
    <property type="entry name" value="PROTEIN WNTLESS HOMOLOG"/>
    <property type="match status" value="1"/>
</dbReference>
<dbReference type="Pfam" id="PF06664">
    <property type="entry name" value="WLS-like_TM"/>
    <property type="match status" value="1"/>
</dbReference>
<dbReference type="Pfam" id="PF21883">
    <property type="entry name" value="WLS_GOLD"/>
    <property type="match status" value="1"/>
</dbReference>
<proteinExistence type="evidence at transcript level"/>
<accession>Q66IZ4</accession>
<sequence length="541" mass="61912">MAGAIIENMSTKKLCMVGVALLLLQVLAFLVGGLIAPKPTSYVNPVAMKCVDVRKNHRSSKWLMPWGTEPCKSIQSFDEAANRMIEANDIVFAAHIPNSQFEMSPWFQFMLVVLQLDIAFKLNNYIEENSMVTLDVSVAYRDDLKEEWKELASSVEQRKLNCILPVEKTLANEGRHYDCDVIPLMELGSVSHKYYLFNIRLPVNERKKANIGIGEIRDLHVVSIFQNGGFTMVWFAMKTFLTPSIIIIMIWYWRRITMMTRSPVLLEKVIFALGFSMTFINIPVEWFSIGYDWTWMLLFGDIRQGIFYAMLLSFWIIFCGEHMMDQTERNRISVYWKQVGPIAFGSCCLFIFDMCERGVQLKNPFYSIWTTDVGAEIAMAFIIVAGICACLYFLFLCFMVYQVFRNISGKQSNLPAMTKARRLHYEGLIFRFKFLMIITLACAALTIVFFITTQITEGNWKLGDLSIELNSAFFTGVYGMWNLYVFALMFLYAPSHKHYGDGQSNDGAGMSSGEELQLTTTITHIDGPTEVYRLAGKEAQE</sequence>
<gene>
    <name type="primary">wls-a</name>
    <name type="synonym">gpr177-a</name>
</gene>
<comment type="function">
    <text evidence="1">Required for a subset of Wnt-dependent developmental processes, in particular, eye and pronephros development. Regulates the secretion of wnt4, which is required for eye development (By similarity).</text>
</comment>
<comment type="subcellular location">
    <subcellularLocation>
        <location evidence="1">Golgi apparatus membrane</location>
        <topology evidence="1">Multi-pass membrane protein</topology>
    </subcellularLocation>
    <subcellularLocation>
        <location evidence="1">Cytoplasmic vesicle membrane</location>
        <topology evidence="1">Multi-pass membrane protein</topology>
    </subcellularLocation>
</comment>
<comment type="similarity">
    <text evidence="3">Belongs to the wntless family.</text>
</comment>
<reference key="1">
    <citation type="submission" date="2004-08" db="EMBL/GenBank/DDBJ databases">
        <authorList>
            <consortium name="NIH - Xenopus Gene Collection (XGC) project"/>
        </authorList>
    </citation>
    <scope>NUCLEOTIDE SEQUENCE [LARGE SCALE MRNA]</scope>
    <source>
        <tissue>Oocyte</tissue>
    </source>
</reference>
<protein>
    <recommendedName>
        <fullName>Protein wntless homolog A</fullName>
    </recommendedName>
    <alternativeName>
        <fullName>Integral membrane protein GPR177-A</fullName>
    </alternativeName>
</protein>